<proteinExistence type="inferred from homology"/>
<accession>Q6D7N6</accession>
<name>Y1289_PECAS</name>
<dbReference type="EMBL" id="BX950851">
    <property type="protein sequence ID" value="CAG74199.1"/>
    <property type="molecule type" value="Genomic_DNA"/>
</dbReference>
<dbReference type="RefSeq" id="WP_011092877.1">
    <property type="nucleotide sequence ID" value="NC_004547.2"/>
</dbReference>
<dbReference type="SMR" id="Q6D7N6"/>
<dbReference type="STRING" id="218491.ECA1289"/>
<dbReference type="KEGG" id="eca:ECA1289"/>
<dbReference type="PATRIC" id="fig|218491.5.peg.1313"/>
<dbReference type="eggNOG" id="ENOG5032YJI">
    <property type="taxonomic scope" value="Bacteria"/>
</dbReference>
<dbReference type="HOGENOM" id="CLU_198936_0_0_6"/>
<dbReference type="Proteomes" id="UP000007966">
    <property type="component" value="Chromosome"/>
</dbReference>
<dbReference type="GO" id="GO:0005886">
    <property type="term" value="C:plasma membrane"/>
    <property type="evidence" value="ECO:0007669"/>
    <property type="project" value="UniProtKB-SubCell"/>
</dbReference>
<dbReference type="HAMAP" id="MF_01566">
    <property type="entry name" value="UPF0370"/>
    <property type="match status" value="1"/>
</dbReference>
<dbReference type="InterPro" id="IPR020910">
    <property type="entry name" value="UPF0370"/>
</dbReference>
<dbReference type="NCBIfam" id="NF010185">
    <property type="entry name" value="PRK13664.1"/>
    <property type="match status" value="1"/>
</dbReference>
<dbReference type="Pfam" id="PF13980">
    <property type="entry name" value="UPF0370"/>
    <property type="match status" value="1"/>
</dbReference>
<organism>
    <name type="scientific">Pectobacterium atrosepticum (strain SCRI 1043 / ATCC BAA-672)</name>
    <name type="common">Erwinia carotovora subsp. atroseptica</name>
    <dbReference type="NCBI Taxonomy" id="218491"/>
    <lineage>
        <taxon>Bacteria</taxon>
        <taxon>Pseudomonadati</taxon>
        <taxon>Pseudomonadota</taxon>
        <taxon>Gammaproteobacteria</taxon>
        <taxon>Enterobacterales</taxon>
        <taxon>Pectobacteriaceae</taxon>
        <taxon>Pectobacterium</taxon>
    </lineage>
</organism>
<gene>
    <name type="ordered locus">ECA1289</name>
</gene>
<reference key="1">
    <citation type="journal article" date="2004" name="Proc. Natl. Acad. Sci. U.S.A.">
        <title>Genome sequence of the enterobacterial phytopathogen Erwinia carotovora subsp. atroseptica and characterization of virulence factors.</title>
        <authorList>
            <person name="Bell K.S."/>
            <person name="Sebaihia M."/>
            <person name="Pritchard L."/>
            <person name="Holden M.T.G."/>
            <person name="Hyman L.J."/>
            <person name="Holeva M.C."/>
            <person name="Thomson N.R."/>
            <person name="Bentley S.D."/>
            <person name="Churcher L.J.C."/>
            <person name="Mungall K."/>
            <person name="Atkin R."/>
            <person name="Bason N."/>
            <person name="Brooks K."/>
            <person name="Chillingworth T."/>
            <person name="Clark K."/>
            <person name="Doggett J."/>
            <person name="Fraser A."/>
            <person name="Hance Z."/>
            <person name="Hauser H."/>
            <person name="Jagels K."/>
            <person name="Moule S."/>
            <person name="Norbertczak H."/>
            <person name="Ormond D."/>
            <person name="Price C."/>
            <person name="Quail M.A."/>
            <person name="Sanders M."/>
            <person name="Walker D."/>
            <person name="Whitehead S."/>
            <person name="Salmond G.P.C."/>
            <person name="Birch P.R.J."/>
            <person name="Parkhill J."/>
            <person name="Toth I.K."/>
        </authorList>
    </citation>
    <scope>NUCLEOTIDE SEQUENCE [LARGE SCALE GENOMIC DNA]</scope>
    <source>
        <strain>SCRI 1043 / ATCC BAA-672</strain>
    </source>
</reference>
<comment type="subcellular location">
    <subcellularLocation>
        <location evidence="1">Cell membrane</location>
        <topology evidence="1">Single-pass membrane protein</topology>
    </subcellularLocation>
</comment>
<comment type="similarity">
    <text evidence="1">Belongs to the UPF0370 family.</text>
</comment>
<feature type="chain" id="PRO_0000244541" description="UPF0370 protein ECA1289">
    <location>
        <begin position="1"/>
        <end position="63"/>
    </location>
</feature>
<feature type="transmembrane region" description="Helical" evidence="1">
    <location>
        <begin position="3"/>
        <end position="23"/>
    </location>
</feature>
<feature type="region of interest" description="Disordered" evidence="2">
    <location>
        <begin position="39"/>
        <end position="63"/>
    </location>
</feature>
<evidence type="ECO:0000255" key="1">
    <source>
        <dbReference type="HAMAP-Rule" id="MF_01566"/>
    </source>
</evidence>
<evidence type="ECO:0000256" key="2">
    <source>
        <dbReference type="SAM" id="MobiDB-lite"/>
    </source>
</evidence>
<keyword id="KW-1003">Cell membrane</keyword>
<keyword id="KW-0472">Membrane</keyword>
<keyword id="KW-1185">Reference proteome</keyword>
<keyword id="KW-0812">Transmembrane</keyword>
<keyword id="KW-1133">Transmembrane helix</keyword>
<protein>
    <recommendedName>
        <fullName evidence="1">UPF0370 protein ECA1289</fullName>
    </recommendedName>
</protein>
<sequence length="63" mass="7679">MAWLADYWWIILIILIGMLINGIKELRNVDHTRFLLNKPKLPPHRDNNDKWDNEEDDWPKKKP</sequence>